<gene>
    <name evidence="1" type="primary">LIA1</name>
    <name type="synonym">MMD1</name>
    <name type="ordered locus">YJR070C</name>
    <name type="ORF">J1814</name>
</gene>
<organism>
    <name type="scientific">Saccharomyces cerevisiae (strain ATCC 204508 / S288c)</name>
    <name type="common">Baker's yeast</name>
    <dbReference type="NCBI Taxonomy" id="559292"/>
    <lineage>
        <taxon>Eukaryota</taxon>
        <taxon>Fungi</taxon>
        <taxon>Dikarya</taxon>
        <taxon>Ascomycota</taxon>
        <taxon>Saccharomycotina</taxon>
        <taxon>Saccharomycetes</taxon>
        <taxon>Saccharomycetales</taxon>
        <taxon>Saccharomycetaceae</taxon>
        <taxon>Saccharomyces</taxon>
    </lineage>
</organism>
<sequence>MSTNFEKHFQENVDECTLEQLRDILVNKSGKTVLANRFRALFNLKTVAEEFATKPEEAKKAIEYIAESFVNDKSELLKHEVAYVLGQTKNLDAAPTLRHVMLDQNQEPMVRHEAAEALGALGDKDSLDDLNKAAKEDPHVAVRETCELAINRINWTHGGAKDKENLQQSLYSSIDPAPPLPLEKDATIPELQALLNDPKQPLFQRYRAMFRLRDIGTDEAILALATGFSAESSLFKHEIAYVFGQIGSPAAVPSLIEVLGRKEEAPMVRHEAAEALGAIASPEVVDVLKSYLNDEVDVVRESCIVALDMYDYENSNELEYAPTAN</sequence>
<evidence type="ECO:0000255" key="1">
    <source>
        <dbReference type="HAMAP-Rule" id="MF_03101"/>
    </source>
</evidence>
<evidence type="ECO:0000269" key="2">
    <source>
    </source>
</evidence>
<evidence type="ECO:0000269" key="3">
    <source>
    </source>
</evidence>
<evidence type="ECO:0000269" key="4">
    <source>
    </source>
</evidence>
<evidence type="ECO:0000269" key="5">
    <source>
    </source>
</evidence>
<evidence type="ECO:0000269" key="6">
    <source>
    </source>
</evidence>
<evidence type="ECO:0007744" key="7">
    <source>
    </source>
</evidence>
<evidence type="ECO:0007744" key="8">
    <source>
    </source>
</evidence>
<evidence type="ECO:0007744" key="9">
    <source>
    </source>
</evidence>
<dbReference type="EC" id="1.14.99.29" evidence="1"/>
<dbReference type="EMBL" id="Z49570">
    <property type="protein sequence ID" value="CAA89598.1"/>
    <property type="molecule type" value="Genomic_DNA"/>
</dbReference>
<dbReference type="EMBL" id="L47993">
    <property type="protein sequence ID" value="AAB39296.1"/>
    <property type="molecule type" value="Genomic_DNA"/>
</dbReference>
<dbReference type="EMBL" id="BK006943">
    <property type="protein sequence ID" value="DAA08857.1"/>
    <property type="molecule type" value="Genomic_DNA"/>
</dbReference>
<dbReference type="PIR" id="S57089">
    <property type="entry name" value="S57089"/>
</dbReference>
<dbReference type="RefSeq" id="NP_012604.1">
    <property type="nucleotide sequence ID" value="NM_001181728.1"/>
</dbReference>
<dbReference type="SMR" id="P47120"/>
<dbReference type="BioGRID" id="33827">
    <property type="interactions" value="260"/>
</dbReference>
<dbReference type="DIP" id="DIP-2829N"/>
<dbReference type="FunCoup" id="P47120">
    <property type="interactions" value="1068"/>
</dbReference>
<dbReference type="IntAct" id="P47120">
    <property type="interactions" value="11"/>
</dbReference>
<dbReference type="MINT" id="P47120"/>
<dbReference type="STRING" id="4932.YJR070C"/>
<dbReference type="iPTMnet" id="P47120"/>
<dbReference type="PaxDb" id="4932-YJR070C"/>
<dbReference type="PeptideAtlas" id="P47120"/>
<dbReference type="EnsemblFungi" id="YJR070C_mRNA">
    <property type="protein sequence ID" value="YJR070C"/>
    <property type="gene ID" value="YJR070C"/>
</dbReference>
<dbReference type="GeneID" id="853534"/>
<dbReference type="KEGG" id="sce:YJR070C"/>
<dbReference type="AGR" id="SGD:S000003831"/>
<dbReference type="SGD" id="S000003831">
    <property type="gene designation" value="LIA1"/>
</dbReference>
<dbReference type="VEuPathDB" id="FungiDB:YJR070C"/>
<dbReference type="eggNOG" id="KOG0567">
    <property type="taxonomic scope" value="Eukaryota"/>
</dbReference>
<dbReference type="HOGENOM" id="CLU_053974_0_0_1"/>
<dbReference type="InParanoid" id="P47120"/>
<dbReference type="OMA" id="LQEPCSI"/>
<dbReference type="OrthoDB" id="421002at2759"/>
<dbReference type="BioCyc" id="YEAST:G3O-31703-MONOMER"/>
<dbReference type="Reactome" id="R-SCE-204626">
    <property type="pathway name" value="Hypusine synthesis from eIF5A-lysine"/>
</dbReference>
<dbReference type="UniPathway" id="UPA00354"/>
<dbReference type="BioGRID-ORCS" id="853534">
    <property type="hits" value="0 hits in 10 CRISPR screens"/>
</dbReference>
<dbReference type="CD-CODE" id="E03F929F">
    <property type="entry name" value="Stress granule"/>
</dbReference>
<dbReference type="PRO" id="PR:P47120"/>
<dbReference type="Proteomes" id="UP000002311">
    <property type="component" value="Chromosome X"/>
</dbReference>
<dbReference type="RNAct" id="P47120">
    <property type="molecule type" value="protein"/>
</dbReference>
<dbReference type="GO" id="GO:0005737">
    <property type="term" value="C:cytoplasm"/>
    <property type="evidence" value="ECO:0007005"/>
    <property type="project" value="SGD"/>
</dbReference>
<dbReference type="GO" id="GO:0005634">
    <property type="term" value="C:nucleus"/>
    <property type="evidence" value="ECO:0007005"/>
    <property type="project" value="SGD"/>
</dbReference>
<dbReference type="GO" id="GO:0019135">
    <property type="term" value="F:deoxyhypusine monooxygenase activity"/>
    <property type="evidence" value="ECO:0000314"/>
    <property type="project" value="SGD"/>
</dbReference>
<dbReference type="GO" id="GO:0046872">
    <property type="term" value="F:metal ion binding"/>
    <property type="evidence" value="ECO:0007669"/>
    <property type="project" value="UniProtKB-KW"/>
</dbReference>
<dbReference type="GO" id="GO:0000226">
    <property type="term" value="P:microtubule cytoskeleton organization"/>
    <property type="evidence" value="ECO:0000315"/>
    <property type="project" value="SGD"/>
</dbReference>
<dbReference type="FunFam" id="1.25.10.10:FF:000099">
    <property type="entry name" value="Deoxyhypusine hydroxylase"/>
    <property type="match status" value="1"/>
</dbReference>
<dbReference type="FunFam" id="1.25.10.10:FF:000292">
    <property type="entry name" value="Deoxyhypusine hydroxylase"/>
    <property type="match status" value="1"/>
</dbReference>
<dbReference type="Gene3D" id="1.25.10.10">
    <property type="entry name" value="Leucine-rich Repeat Variant"/>
    <property type="match status" value="2"/>
</dbReference>
<dbReference type="HAMAP" id="MF_03101">
    <property type="entry name" value="Deoxyhypusine_hydroxylase"/>
    <property type="match status" value="1"/>
</dbReference>
<dbReference type="InterPro" id="IPR011989">
    <property type="entry name" value="ARM-like"/>
</dbReference>
<dbReference type="InterPro" id="IPR016024">
    <property type="entry name" value="ARM-type_fold"/>
</dbReference>
<dbReference type="InterPro" id="IPR027517">
    <property type="entry name" value="Deoxyhypusine_hydroxylase"/>
</dbReference>
<dbReference type="InterPro" id="IPR004155">
    <property type="entry name" value="PBS_lyase_HEAT"/>
</dbReference>
<dbReference type="PANTHER" id="PTHR12697:SF5">
    <property type="entry name" value="DEOXYHYPUSINE HYDROXYLASE"/>
    <property type="match status" value="1"/>
</dbReference>
<dbReference type="PANTHER" id="PTHR12697">
    <property type="entry name" value="PBS LYASE HEAT-LIKE PROTEIN"/>
    <property type="match status" value="1"/>
</dbReference>
<dbReference type="Pfam" id="PF13646">
    <property type="entry name" value="HEAT_2"/>
    <property type="match status" value="2"/>
</dbReference>
<dbReference type="SMART" id="SM00567">
    <property type="entry name" value="EZ_HEAT"/>
    <property type="match status" value="5"/>
</dbReference>
<dbReference type="SUPFAM" id="SSF48371">
    <property type="entry name" value="ARM repeat"/>
    <property type="match status" value="1"/>
</dbReference>
<keyword id="KW-0007">Acetylation</keyword>
<keyword id="KW-0963">Cytoplasm</keyword>
<keyword id="KW-0386">Hypusine biosynthesis</keyword>
<keyword id="KW-0408">Iron</keyword>
<keyword id="KW-0479">Metal-binding</keyword>
<keyword id="KW-0503">Monooxygenase</keyword>
<keyword id="KW-0539">Nucleus</keyword>
<keyword id="KW-0560">Oxidoreductase</keyword>
<keyword id="KW-0597">Phosphoprotein</keyword>
<keyword id="KW-1185">Reference proteome</keyword>
<keyword id="KW-0677">Repeat</keyword>
<accession>P47120</accession>
<accession>D6VWP1</accession>
<reference key="1">
    <citation type="journal article" date="1996" name="Yeast">
        <title>Analysis of a 62 kb DNA sequence of chromosome X reveals 36 open reading frames and a gene cluster with a counterpart on chromosome XI.</title>
        <authorList>
            <person name="Huang M.-E."/>
            <person name="Manus V."/>
            <person name="Chuat J.-C."/>
            <person name="Galibert F."/>
        </authorList>
    </citation>
    <scope>NUCLEOTIDE SEQUENCE [GENOMIC DNA]</scope>
    <source>
        <strain>ATCC 204508 / S288c</strain>
    </source>
</reference>
<reference key="2">
    <citation type="journal article" date="1996" name="EMBO J.">
        <title>Complete nucleotide sequence of Saccharomyces cerevisiae chromosome X.</title>
        <authorList>
            <person name="Galibert F."/>
            <person name="Alexandraki D."/>
            <person name="Baur A."/>
            <person name="Boles E."/>
            <person name="Chalwatzis N."/>
            <person name="Chuat J.-C."/>
            <person name="Coster F."/>
            <person name="Cziepluch C."/>
            <person name="de Haan M."/>
            <person name="Domdey H."/>
            <person name="Durand P."/>
            <person name="Entian K.-D."/>
            <person name="Gatius M."/>
            <person name="Goffeau A."/>
            <person name="Grivell L.A."/>
            <person name="Hennemann A."/>
            <person name="Herbert C.J."/>
            <person name="Heumann K."/>
            <person name="Hilger F."/>
            <person name="Hollenberg C.P."/>
            <person name="Huang M.-E."/>
            <person name="Jacq C."/>
            <person name="Jauniaux J.-C."/>
            <person name="Katsoulou C."/>
            <person name="Kirchrath L."/>
            <person name="Kleine K."/>
            <person name="Kordes E."/>
            <person name="Koetter P."/>
            <person name="Liebl S."/>
            <person name="Louis E.J."/>
            <person name="Manus V."/>
            <person name="Mewes H.-W."/>
            <person name="Miosga T."/>
            <person name="Obermaier B."/>
            <person name="Perea J."/>
            <person name="Pohl T.M."/>
            <person name="Portetelle D."/>
            <person name="Pujol A."/>
            <person name="Purnelle B."/>
            <person name="Ramezani Rad M."/>
            <person name="Rasmussen S.W."/>
            <person name="Rose M."/>
            <person name="Rossau R."/>
            <person name="Schaaff-Gerstenschlaeger I."/>
            <person name="Smits P.H.M."/>
            <person name="Scarcez T."/>
            <person name="Soriano N."/>
            <person name="To Van D."/>
            <person name="Tzermia M."/>
            <person name="Van Broekhoven A."/>
            <person name="Vandenbol M."/>
            <person name="Wedler H."/>
            <person name="von Wettstein D."/>
            <person name="Wambutt R."/>
            <person name="Zagulski M."/>
            <person name="Zollner A."/>
            <person name="Karpfinger-Hartl L."/>
        </authorList>
    </citation>
    <scope>NUCLEOTIDE SEQUENCE [LARGE SCALE GENOMIC DNA]</scope>
    <source>
        <strain>ATCC 204508 / S288c</strain>
    </source>
</reference>
<reference key="3">
    <citation type="journal article" date="2014" name="G3 (Bethesda)">
        <title>The reference genome sequence of Saccharomyces cerevisiae: Then and now.</title>
        <authorList>
            <person name="Engel S.R."/>
            <person name="Dietrich F.S."/>
            <person name="Fisk D.G."/>
            <person name="Binkley G."/>
            <person name="Balakrishnan R."/>
            <person name="Costanzo M.C."/>
            <person name="Dwight S.S."/>
            <person name="Hitz B.C."/>
            <person name="Karra K."/>
            <person name="Nash R.S."/>
            <person name="Weng S."/>
            <person name="Wong E.D."/>
            <person name="Lloyd P."/>
            <person name="Skrzypek M.S."/>
            <person name="Miyasato S.R."/>
            <person name="Simison M."/>
            <person name="Cherry J.M."/>
        </authorList>
    </citation>
    <scope>GENOME REANNOTATION</scope>
    <source>
        <strain>ATCC 204508 / S288c</strain>
    </source>
</reference>
<reference key="4">
    <citation type="journal article" date="1996" name="Proc. Natl. Acad. Sci. U.S.A.">
        <title>Linking genome and proteome by mass spectrometry: large-scale identification of yeast proteins from two dimensional gels.</title>
        <authorList>
            <person name="Shevchenko A."/>
            <person name="Jensen O.N."/>
            <person name="Podtelejnikov A.V."/>
            <person name="Sagliocco F."/>
            <person name="Wilm M."/>
            <person name="Vorm O."/>
            <person name="Mortensen P."/>
            <person name="Shevchenko A."/>
            <person name="Boucherie H."/>
            <person name="Mann M."/>
        </authorList>
    </citation>
    <scope>IDENTIFICATION BY MASS SPECTROMETRY</scope>
</reference>
<reference key="5">
    <citation type="journal article" date="1997" name="Electrophoresis">
        <title>Proteome studies of Saccharomyces cerevisiae: identification and characterization of abundant proteins.</title>
        <authorList>
            <person name="Garrels J.I."/>
            <person name="McLaughlin C.S."/>
            <person name="Warner J.R."/>
            <person name="Futcher B."/>
            <person name="Latter G.I."/>
            <person name="Kobayashi R."/>
            <person name="Schwender B."/>
            <person name="Volpe T."/>
            <person name="Anderson D.S."/>
            <person name="Mesquita-Fuentes R."/>
            <person name="Payne W.E."/>
        </authorList>
    </citation>
    <scope>ACETYLATION AT SER-2</scope>
</reference>
<reference key="6">
    <citation type="journal article" date="2003" name="Nature">
        <title>Global analysis of protein localization in budding yeast.</title>
        <authorList>
            <person name="Huh W.-K."/>
            <person name="Falvo J.V."/>
            <person name="Gerke L.C."/>
            <person name="Carroll A.S."/>
            <person name="Howson R.W."/>
            <person name="Weissman J.S."/>
            <person name="O'Shea E.K."/>
        </authorList>
    </citation>
    <scope>SUBCELLULAR LOCATION [LARGE SCALE ANALYSIS]</scope>
</reference>
<reference key="7">
    <citation type="journal article" date="2003" name="Nature">
        <title>Global analysis of protein expression in yeast.</title>
        <authorList>
            <person name="Ghaemmaghami S."/>
            <person name="Huh W.-K."/>
            <person name="Bower K."/>
            <person name="Howson R.W."/>
            <person name="Belle A."/>
            <person name="Dephoure N."/>
            <person name="O'Shea E.K."/>
            <person name="Weissman J.S."/>
        </authorList>
    </citation>
    <scope>LEVEL OF PROTEIN EXPRESSION [LARGE SCALE ANALYSIS]</scope>
</reference>
<reference key="8">
    <citation type="journal article" date="2006" name="Proc. Natl. Acad. Sci. U.S.A.">
        <title>Molecular cloning, expression, and structural prediction of deoxyhypusine hydroxylase: a HEAT-repeat-containing metalloenzyme.</title>
        <authorList>
            <person name="Park J.-H."/>
            <person name="Aravind L."/>
            <person name="Wolff E.C."/>
            <person name="Kaevel J."/>
            <person name="Kim Y.S."/>
            <person name="Park M.H."/>
        </authorList>
    </citation>
    <scope>FUNCTION</scope>
    <scope>CATALYTIC ACTIVITY</scope>
</reference>
<reference key="9">
    <citation type="journal article" date="2007" name="J. Proteome Res.">
        <title>Large-scale phosphorylation analysis of alpha-factor-arrested Saccharomyces cerevisiae.</title>
        <authorList>
            <person name="Li X."/>
            <person name="Gerber S.A."/>
            <person name="Rudner A.D."/>
            <person name="Beausoleil S.A."/>
            <person name="Haas W."/>
            <person name="Villen J."/>
            <person name="Elias J.E."/>
            <person name="Gygi S.P."/>
        </authorList>
    </citation>
    <scope>PHOSPHORYLATION [LARGE SCALE ANALYSIS] AT SER-281</scope>
    <scope>IDENTIFICATION BY MASS SPECTROMETRY [LARGE SCALE ANALYSIS]</scope>
    <source>
        <strain>ADR376</strain>
    </source>
</reference>
<reference key="10">
    <citation type="journal article" date="2008" name="Mol. Cell. Proteomics">
        <title>A multidimensional chromatography technology for in-depth phosphoproteome analysis.</title>
        <authorList>
            <person name="Albuquerque C.P."/>
            <person name="Smolka M.B."/>
            <person name="Payne S.H."/>
            <person name="Bafna V."/>
            <person name="Eng J."/>
            <person name="Zhou H."/>
        </authorList>
    </citation>
    <scope>PHOSPHORYLATION [LARGE SCALE ANALYSIS] AT SER-281</scope>
    <scope>IDENTIFICATION BY MASS SPECTROMETRY [LARGE SCALE ANALYSIS]</scope>
</reference>
<reference key="11">
    <citation type="journal article" date="2009" name="Science">
        <title>Global analysis of Cdk1 substrate phosphorylation sites provides insights into evolution.</title>
        <authorList>
            <person name="Holt L.J."/>
            <person name="Tuch B.B."/>
            <person name="Villen J."/>
            <person name="Johnson A.D."/>
            <person name="Gygi S.P."/>
            <person name="Morgan D.O."/>
        </authorList>
    </citation>
    <scope>PHOSPHORYLATION [LARGE SCALE ANALYSIS] AT SER-126; THR-187 AND SER-281</scope>
    <scope>IDENTIFICATION BY MASS SPECTROMETRY [LARGE SCALE ANALYSIS]</scope>
</reference>
<reference key="12">
    <citation type="journal article" date="2010" name="Amino Acids">
        <title>Evidence for conformational changes in the yeast deoxyhypusine hydroxylase Lia1 upon iron displacement from its active site.</title>
        <authorList>
            <person name="Cano V.S."/>
            <person name="Medrano F.J."/>
            <person name="Park M.H."/>
            <person name="Valentini S.R."/>
        </authorList>
    </citation>
    <scope>FUNCTION</scope>
    <scope>COFACTOR</scope>
    <scope>MUTAGENESIS OF HIS-79; GLU-80; HIS-112; GLU-113; GLU-116; HIS-237; GLU-238; HIS-270; GLU-271 AND GLU-274</scope>
    <scope>BIOPHYSICOCHEMICAL PROPERTIES</scope>
</reference>
<comment type="function">
    <text evidence="1 4 5">Catalyzes the hydroxylation of the N(6)-(4-aminobutyl)-L-lysine intermediate to form hypusine, an essential post-translational modification only found in mature eIF-5A factor.</text>
</comment>
<comment type="catalytic activity">
    <reaction evidence="1 4">
        <text>[eIF5A protein]-deoxyhypusine + AH2 + O2 = [eIF5A protein]-hypusine + A + H2O</text>
        <dbReference type="Rhea" id="RHEA:14101"/>
        <dbReference type="Rhea" id="RHEA-COMP:10144"/>
        <dbReference type="Rhea" id="RHEA-COMP:12592"/>
        <dbReference type="ChEBI" id="CHEBI:13193"/>
        <dbReference type="ChEBI" id="CHEBI:15377"/>
        <dbReference type="ChEBI" id="CHEBI:15379"/>
        <dbReference type="ChEBI" id="CHEBI:17499"/>
        <dbReference type="ChEBI" id="CHEBI:82657"/>
        <dbReference type="ChEBI" id="CHEBI:91175"/>
        <dbReference type="EC" id="1.14.99.29"/>
    </reaction>
</comment>
<comment type="cofactor">
    <cofactor evidence="1 5">
        <name>Fe(2+)</name>
        <dbReference type="ChEBI" id="CHEBI:29033"/>
    </cofactor>
    <text evidence="1 5">Binds 2 Fe(2+) ions per subunit.</text>
</comment>
<comment type="biophysicochemical properties">
    <phDependence>
        <text evidence="5">Optimum pH is 7.5. Active from pH 6 to 10.</text>
    </phDependence>
</comment>
<comment type="pathway">
    <text evidence="1">Protein modification; eIF5A hypusination.</text>
</comment>
<comment type="interaction">
    <interactant intactId="EBI-25526">
        <id>P47120</id>
    </interactant>
    <interactant intactId="EBI-9033">
        <id>P23301</id>
        <label>HYP2</label>
    </interactant>
    <organismsDiffer>false</organismsDiffer>
    <experiments>2</experiments>
</comment>
<comment type="subcellular location">
    <subcellularLocation>
        <location evidence="1 2">Cytoplasm</location>
    </subcellularLocation>
    <subcellularLocation>
        <location evidence="1 2">Nucleus</location>
    </subcellularLocation>
</comment>
<comment type="miscellaneous">
    <text evidence="3">Present with 39900 molecules/cell in log phase SD medium.</text>
</comment>
<comment type="similarity">
    <text evidence="1">Belongs to the deoxyhypusine hydroxylase family.</text>
</comment>
<proteinExistence type="evidence at protein level"/>
<protein>
    <recommendedName>
        <fullName evidence="1">Deoxyhypusine hydroxylase</fullName>
        <shortName evidence="1">DOHH</shortName>
        <ecNumber evidence="1">1.14.99.29</ecNumber>
    </recommendedName>
    <alternativeName>
        <fullName evidence="1">Deoxyhypusine dioxygenase</fullName>
    </alternativeName>
    <alternativeName>
        <fullName evidence="1">Deoxyhypusine monooxygenase</fullName>
    </alternativeName>
    <alternativeName>
        <fullName evidence="1">Ligand of eIF5A protein 1</fullName>
    </alternativeName>
</protein>
<feature type="initiator methionine" description="Removed" evidence="1 6">
    <location>
        <position position="1"/>
    </location>
</feature>
<feature type="chain" id="PRO_0000203100" description="Deoxyhypusine hydroxylase">
    <location>
        <begin position="2"/>
        <end position="325"/>
    </location>
</feature>
<feature type="repeat" description="HEAT-like PBS-type 1">
    <location>
        <begin position="77"/>
        <end position="103"/>
    </location>
</feature>
<feature type="repeat" description="HEAT-like PBS-type 2">
    <location>
        <begin position="110"/>
        <end position="136"/>
    </location>
</feature>
<feature type="repeat" description="HEAT-like PBS-type 3">
    <location>
        <begin position="202"/>
        <end position="231"/>
    </location>
</feature>
<feature type="repeat" description="HEAT-like PBS-type 4">
    <location>
        <begin position="235"/>
        <end position="261"/>
    </location>
</feature>
<feature type="repeat" description="HEAT-like PBS-type 5">
    <location>
        <begin position="268"/>
        <end position="294"/>
    </location>
</feature>
<feature type="binding site">
    <location>
        <position position="79"/>
    </location>
    <ligand>
        <name>Fe cation</name>
        <dbReference type="ChEBI" id="CHEBI:24875"/>
        <label>1</label>
    </ligand>
</feature>
<feature type="binding site">
    <location>
        <position position="80"/>
    </location>
    <ligand>
        <name>Fe cation</name>
        <dbReference type="ChEBI" id="CHEBI:24875"/>
        <label>1</label>
    </ligand>
</feature>
<feature type="binding site">
    <location>
        <position position="112"/>
    </location>
    <ligand>
        <name>Fe cation</name>
        <dbReference type="ChEBI" id="CHEBI:24875"/>
        <label>1</label>
    </ligand>
</feature>
<feature type="binding site">
    <location>
        <position position="113"/>
    </location>
    <ligand>
        <name>Fe cation</name>
        <dbReference type="ChEBI" id="CHEBI:24875"/>
        <label>1</label>
    </ligand>
</feature>
<feature type="binding site">
    <location>
        <position position="237"/>
    </location>
    <ligand>
        <name>Fe cation</name>
        <dbReference type="ChEBI" id="CHEBI:24875"/>
        <label>2</label>
    </ligand>
</feature>
<feature type="binding site">
    <location>
        <position position="238"/>
    </location>
    <ligand>
        <name>Fe cation</name>
        <dbReference type="ChEBI" id="CHEBI:24875"/>
        <label>2</label>
    </ligand>
</feature>
<feature type="binding site">
    <location>
        <position position="270"/>
    </location>
    <ligand>
        <name>Fe cation</name>
        <dbReference type="ChEBI" id="CHEBI:24875"/>
        <label>2</label>
    </ligand>
</feature>
<feature type="binding site">
    <location>
        <position position="271"/>
    </location>
    <ligand>
        <name>Fe cation</name>
        <dbReference type="ChEBI" id="CHEBI:24875"/>
        <label>2</label>
    </ligand>
</feature>
<feature type="modified residue" description="N-acetylserine" evidence="1 6">
    <location>
        <position position="2"/>
    </location>
</feature>
<feature type="modified residue" description="Phosphoserine" evidence="9">
    <location>
        <position position="126"/>
    </location>
</feature>
<feature type="modified residue" description="Phosphothreonine" evidence="9">
    <location>
        <position position="187"/>
    </location>
</feature>
<feature type="modified residue" description="Phosphoserine" evidence="7 8 9">
    <location>
        <position position="281"/>
    </location>
</feature>
<feature type="mutagenesis site" description="Abolishes both iron-binding and enzyme activity." evidence="5">
    <original>H</original>
    <variation>A</variation>
    <location>
        <position position="79"/>
    </location>
</feature>
<feature type="mutagenesis site" description="Abolishes enzyme activity and impairs iron-binding." evidence="5">
    <original>E</original>
    <variation>A</variation>
    <location>
        <position position="80"/>
    </location>
</feature>
<feature type="mutagenesis site" description="Abolishes both iron-binding and enzyme activity." evidence="5">
    <original>H</original>
    <variation>A</variation>
    <location>
        <position position="112"/>
    </location>
</feature>
<feature type="mutagenesis site" description="Abolishes iron-binding, substrate-binding, and enzyme activity." evidence="5">
    <original>E</original>
    <variation>A</variation>
    <location>
        <position position="113"/>
    </location>
</feature>
<feature type="mutagenesis site" description="Abolishes substrate-binding and enzyme activity." evidence="5">
    <original>E</original>
    <variation>A</variation>
    <location>
        <position position="116"/>
    </location>
</feature>
<feature type="mutagenesis site" description="Reduces enzyme activity by 97%." evidence="5">
    <original>E</original>
    <variation>D</variation>
    <location>
        <position position="116"/>
    </location>
</feature>
<feature type="mutagenesis site" description="Abolishes both iron-binding and enzyme activity." evidence="5">
    <original>H</original>
    <variation>A</variation>
    <location>
        <position position="237"/>
    </location>
</feature>
<feature type="mutagenesis site" description="Abolishes substrate-binding, enzyme activity, and impairs iron-binding." evidence="5">
    <original>E</original>
    <variation>A</variation>
    <location>
        <position position="238"/>
    </location>
</feature>
<feature type="mutagenesis site" description="Abolishes iron-binding, substrate-binding, and enzyme activity." evidence="5">
    <original>H</original>
    <variation>A</variation>
    <location>
        <position position="270"/>
    </location>
</feature>
<feature type="mutagenesis site" description="Abolishes iron-binding, substrate-binding, and enzyme activity." evidence="5">
    <original>E</original>
    <variation>A</variation>
    <location>
        <position position="271"/>
    </location>
</feature>
<feature type="mutagenesis site" description="Abolishes substrate-binding." evidence="5">
    <original>E</original>
    <variation>A</variation>
    <location>
        <position position="274"/>
    </location>
</feature>
<name>DOHH_YEAST</name>